<name>SSTT_KLEP7</name>
<dbReference type="EMBL" id="CP000647">
    <property type="protein sequence ID" value="ABR78912.1"/>
    <property type="molecule type" value="Genomic_DNA"/>
</dbReference>
<dbReference type="RefSeq" id="WP_002917895.1">
    <property type="nucleotide sequence ID" value="NC_009648.1"/>
</dbReference>
<dbReference type="SMR" id="A6TEC8"/>
<dbReference type="STRING" id="272620.KPN_03517"/>
<dbReference type="PaxDb" id="272620-KPN_03517"/>
<dbReference type="EnsemblBacteria" id="ABR78912">
    <property type="protein sequence ID" value="ABR78912"/>
    <property type="gene ID" value="KPN_03517"/>
</dbReference>
<dbReference type="KEGG" id="kpn:KPN_03517"/>
<dbReference type="HOGENOM" id="CLU_044581_0_0_6"/>
<dbReference type="Proteomes" id="UP000000265">
    <property type="component" value="Chromosome"/>
</dbReference>
<dbReference type="GO" id="GO:0005886">
    <property type="term" value="C:plasma membrane"/>
    <property type="evidence" value="ECO:0007669"/>
    <property type="project" value="UniProtKB-SubCell"/>
</dbReference>
<dbReference type="GO" id="GO:0005295">
    <property type="term" value="F:neutral L-amino acid:sodium symporter activity"/>
    <property type="evidence" value="ECO:0007669"/>
    <property type="project" value="TreeGrafter"/>
</dbReference>
<dbReference type="GO" id="GO:0032329">
    <property type="term" value="P:serine transport"/>
    <property type="evidence" value="ECO:0007669"/>
    <property type="project" value="InterPro"/>
</dbReference>
<dbReference type="GO" id="GO:0015826">
    <property type="term" value="P:threonine transport"/>
    <property type="evidence" value="ECO:0007669"/>
    <property type="project" value="InterPro"/>
</dbReference>
<dbReference type="FunFam" id="1.10.3860.10:FF:000003">
    <property type="entry name" value="Serine/threonine transporter sstT"/>
    <property type="match status" value="1"/>
</dbReference>
<dbReference type="Gene3D" id="1.10.3860.10">
    <property type="entry name" value="Sodium:dicarboxylate symporter"/>
    <property type="match status" value="1"/>
</dbReference>
<dbReference type="HAMAP" id="MF_01582">
    <property type="entry name" value="Ser_Thr_transp_SstT"/>
    <property type="match status" value="1"/>
</dbReference>
<dbReference type="InterPro" id="IPR001991">
    <property type="entry name" value="Na-dicarboxylate_symporter"/>
</dbReference>
<dbReference type="InterPro" id="IPR036458">
    <property type="entry name" value="Na:dicarbo_symporter_sf"/>
</dbReference>
<dbReference type="InterPro" id="IPR023025">
    <property type="entry name" value="Ser_Thr_transp_SstT"/>
</dbReference>
<dbReference type="NCBIfam" id="NF010151">
    <property type="entry name" value="PRK13628.1"/>
    <property type="match status" value="1"/>
</dbReference>
<dbReference type="PANTHER" id="PTHR42865">
    <property type="entry name" value="PROTON/GLUTAMATE-ASPARTATE SYMPORTER"/>
    <property type="match status" value="1"/>
</dbReference>
<dbReference type="PANTHER" id="PTHR42865:SF8">
    <property type="entry name" value="SERINE_THREONINE TRANSPORTER SSTT"/>
    <property type="match status" value="1"/>
</dbReference>
<dbReference type="Pfam" id="PF00375">
    <property type="entry name" value="SDF"/>
    <property type="match status" value="1"/>
</dbReference>
<dbReference type="PRINTS" id="PR00173">
    <property type="entry name" value="EDTRNSPORT"/>
</dbReference>
<dbReference type="SUPFAM" id="SSF118215">
    <property type="entry name" value="Proton glutamate symport protein"/>
    <property type="match status" value="1"/>
</dbReference>
<dbReference type="PROSITE" id="PS00713">
    <property type="entry name" value="NA_DICARBOXYL_SYMP_1"/>
    <property type="match status" value="1"/>
</dbReference>
<feature type="chain" id="PRO_0000318795" description="Serine/threonine transporter SstT">
    <location>
        <begin position="1"/>
        <end position="415"/>
    </location>
</feature>
<feature type="transmembrane region" description="Helical" evidence="1">
    <location>
        <begin position="23"/>
        <end position="43"/>
    </location>
</feature>
<feature type="transmembrane region" description="Helical" evidence="1">
    <location>
        <begin position="47"/>
        <end position="67"/>
    </location>
</feature>
<feature type="transmembrane region" description="Helical" evidence="1">
    <location>
        <begin position="85"/>
        <end position="105"/>
    </location>
</feature>
<feature type="transmembrane region" description="Helical" evidence="1">
    <location>
        <begin position="144"/>
        <end position="164"/>
    </location>
</feature>
<feature type="transmembrane region" description="Helical" evidence="1">
    <location>
        <begin position="181"/>
        <end position="201"/>
    </location>
</feature>
<feature type="transmembrane region" description="Helical" evidence="1">
    <location>
        <begin position="220"/>
        <end position="240"/>
    </location>
</feature>
<feature type="transmembrane region" description="Helical" evidence="1">
    <location>
        <begin position="293"/>
        <end position="313"/>
    </location>
</feature>
<feature type="transmembrane region" description="Helical" evidence="1">
    <location>
        <begin position="333"/>
        <end position="353"/>
    </location>
</feature>
<organism>
    <name type="scientific">Klebsiella pneumoniae subsp. pneumoniae (strain ATCC 700721 / MGH 78578)</name>
    <dbReference type="NCBI Taxonomy" id="272620"/>
    <lineage>
        <taxon>Bacteria</taxon>
        <taxon>Pseudomonadati</taxon>
        <taxon>Pseudomonadota</taxon>
        <taxon>Gammaproteobacteria</taxon>
        <taxon>Enterobacterales</taxon>
        <taxon>Enterobacteriaceae</taxon>
        <taxon>Klebsiella/Raoultella group</taxon>
        <taxon>Klebsiella</taxon>
        <taxon>Klebsiella pneumoniae complex</taxon>
    </lineage>
</organism>
<keyword id="KW-0029">Amino-acid transport</keyword>
<keyword id="KW-0997">Cell inner membrane</keyword>
<keyword id="KW-1003">Cell membrane</keyword>
<keyword id="KW-0472">Membrane</keyword>
<keyword id="KW-0769">Symport</keyword>
<keyword id="KW-0812">Transmembrane</keyword>
<keyword id="KW-1133">Transmembrane helix</keyword>
<keyword id="KW-0813">Transport</keyword>
<evidence type="ECO:0000255" key="1">
    <source>
        <dbReference type="HAMAP-Rule" id="MF_01582"/>
    </source>
</evidence>
<protein>
    <recommendedName>
        <fullName evidence="1">Serine/threonine transporter SstT</fullName>
    </recommendedName>
    <alternativeName>
        <fullName evidence="1">Na(+)/serine-threonine symporter</fullName>
    </alternativeName>
</protein>
<gene>
    <name evidence="1" type="primary">sstT</name>
    <name type="ordered locus">KPN78578_34880</name>
    <name type="ORF">KPN_03517</name>
</gene>
<proteinExistence type="inferred from homology"/>
<reference key="1">
    <citation type="submission" date="2006-09" db="EMBL/GenBank/DDBJ databases">
        <authorList>
            <consortium name="The Klebsiella pneumonia Genome Sequencing Project"/>
            <person name="McClelland M."/>
            <person name="Sanderson E.K."/>
            <person name="Spieth J."/>
            <person name="Clifton W.S."/>
            <person name="Latreille P."/>
            <person name="Sabo A."/>
            <person name="Pepin K."/>
            <person name="Bhonagiri V."/>
            <person name="Porwollik S."/>
            <person name="Ali J."/>
            <person name="Wilson R.K."/>
        </authorList>
    </citation>
    <scope>NUCLEOTIDE SEQUENCE [LARGE SCALE GENOMIC DNA]</scope>
    <source>
        <strain>ATCC 700721 / MGH 78578</strain>
    </source>
</reference>
<comment type="function">
    <text evidence="1">Involved in the import of serine and threonine into the cell, with the concomitant import of sodium (symport system).</text>
</comment>
<comment type="catalytic activity">
    <reaction evidence="1">
        <text>L-serine(in) + Na(+)(in) = L-serine(out) + Na(+)(out)</text>
        <dbReference type="Rhea" id="RHEA:29575"/>
        <dbReference type="ChEBI" id="CHEBI:29101"/>
        <dbReference type="ChEBI" id="CHEBI:33384"/>
    </reaction>
    <physiologicalReaction direction="right-to-left" evidence="1">
        <dbReference type="Rhea" id="RHEA:29577"/>
    </physiologicalReaction>
</comment>
<comment type="catalytic activity">
    <reaction evidence="1">
        <text>L-threonine(in) + Na(+)(in) = L-threonine(out) + Na(+)(out)</text>
        <dbReference type="Rhea" id="RHEA:69999"/>
        <dbReference type="ChEBI" id="CHEBI:29101"/>
        <dbReference type="ChEBI" id="CHEBI:57926"/>
    </reaction>
    <physiologicalReaction direction="right-to-left" evidence="1">
        <dbReference type="Rhea" id="RHEA:70001"/>
    </physiologicalReaction>
</comment>
<comment type="subcellular location">
    <subcellularLocation>
        <location evidence="1">Cell inner membrane</location>
        <topology evidence="1">Multi-pass membrane protein</topology>
    </subcellularLocation>
</comment>
<comment type="similarity">
    <text evidence="1">Belongs to the dicarboxylate/amino acid:cation symporter (DAACS) (TC 2.A.23) family.</text>
</comment>
<sequence>MTTRTPSSGWLSRLAQGSLVKQILIGLVLGVLLALVSKPAAIAVGLLGTLFVGALKAVAPVLVLMLVMASIANHQHGQKTSIRPILFLYLLGTFSAALTAVLFSFLFPSTLHLTTAADSITPPSGIVEVLRGLLMSMVSNPIDALLNANYIGILVWAVGLGFALRHGNDTTKNLINDVSHAVTFIVKVVIRFAPLGIFGLVSSTLATTGFETLWGYAQLLLVLVGCMLLVALVINPLLVFWKIRRNPYPLVLTCLRESGVYAFFTRSSAANIPVNMALCEKLNLDRDTYSVSIPLGATINMAGAAITITVLTLAAVHTLNIPVDLPTALLLSVVASLCACGASGVAGGSLLLIPLACNMFGIPNDVAMQVVAVGFIIGVLQDSCETALNSSTDALFTAAACMAEDDQLAKNALRG</sequence>
<accession>A6TEC8</accession>